<gene>
    <name evidence="1" type="primary">MDE1</name>
    <name type="ORF">CPC735_056440</name>
</gene>
<proteinExistence type="inferred from homology"/>
<protein>
    <recommendedName>
        <fullName evidence="1">Methylthioribulose-1-phosphate dehydratase</fullName>
        <shortName evidence="1">MTRu-1-P dehydratase</shortName>
        <ecNumber evidence="1">4.2.1.109</ecNumber>
    </recommendedName>
</protein>
<name>MTNB_COCP7</name>
<keyword id="KW-0028">Amino-acid biosynthesis</keyword>
<keyword id="KW-0963">Cytoplasm</keyword>
<keyword id="KW-0456">Lyase</keyword>
<keyword id="KW-0479">Metal-binding</keyword>
<keyword id="KW-0486">Methionine biosynthesis</keyword>
<keyword id="KW-0862">Zinc</keyword>
<reference key="1">
    <citation type="journal article" date="2009" name="Genome Res.">
        <title>Comparative genomic analyses of the human fungal pathogens Coccidioides and their relatives.</title>
        <authorList>
            <person name="Sharpton T.J."/>
            <person name="Stajich J.E."/>
            <person name="Rounsley S.D."/>
            <person name="Gardner M.J."/>
            <person name="Wortman J.R."/>
            <person name="Jordar V.S."/>
            <person name="Maiti R."/>
            <person name="Kodira C.D."/>
            <person name="Neafsey D.E."/>
            <person name="Zeng Q."/>
            <person name="Hung C.-Y."/>
            <person name="McMahan C."/>
            <person name="Muszewska A."/>
            <person name="Grynberg M."/>
            <person name="Mandel M.A."/>
            <person name="Kellner E.M."/>
            <person name="Barker B.M."/>
            <person name="Galgiani J.N."/>
            <person name="Orbach M.J."/>
            <person name="Kirkland T.N."/>
            <person name="Cole G.T."/>
            <person name="Henn M.R."/>
            <person name="Birren B.W."/>
            <person name="Taylor J.W."/>
        </authorList>
    </citation>
    <scope>NUCLEOTIDE SEQUENCE [LARGE SCALE GENOMIC DNA]</scope>
    <source>
        <strain>C735</strain>
    </source>
</reference>
<comment type="function">
    <text evidence="1">Catalyzes the dehydration of methylthioribulose-1-phosphate (MTRu-1-P) into 2,3-diketo-5-methylthiopentyl-1-phosphate (DK-MTP-1-P).</text>
</comment>
<comment type="catalytic activity">
    <reaction evidence="1">
        <text>5-(methylsulfanyl)-D-ribulose 1-phosphate = 5-methylsulfanyl-2,3-dioxopentyl phosphate + H2O</text>
        <dbReference type="Rhea" id="RHEA:15549"/>
        <dbReference type="ChEBI" id="CHEBI:15377"/>
        <dbReference type="ChEBI" id="CHEBI:58548"/>
        <dbReference type="ChEBI" id="CHEBI:58828"/>
        <dbReference type="EC" id="4.2.1.109"/>
    </reaction>
</comment>
<comment type="cofactor">
    <cofactor evidence="1">
        <name>Zn(2+)</name>
        <dbReference type="ChEBI" id="CHEBI:29105"/>
    </cofactor>
    <text evidence="1">Binds 1 zinc ion per subunit.</text>
</comment>
<comment type="pathway">
    <text evidence="1">Amino-acid biosynthesis; L-methionine biosynthesis via salvage pathway; L-methionine from S-methyl-5-thio-alpha-D-ribose 1-phosphate: step 2/6.</text>
</comment>
<comment type="subcellular location">
    <subcellularLocation>
        <location evidence="1">Cytoplasm</location>
    </subcellularLocation>
</comment>
<comment type="similarity">
    <text evidence="1">Belongs to the aldolase class II family. MtnB subfamily.</text>
</comment>
<organism>
    <name type="scientific">Coccidioides posadasii (strain C735)</name>
    <name type="common">Valley fever fungus</name>
    <dbReference type="NCBI Taxonomy" id="222929"/>
    <lineage>
        <taxon>Eukaryota</taxon>
        <taxon>Fungi</taxon>
        <taxon>Dikarya</taxon>
        <taxon>Ascomycota</taxon>
        <taxon>Pezizomycotina</taxon>
        <taxon>Eurotiomycetes</taxon>
        <taxon>Eurotiomycetidae</taxon>
        <taxon>Onygenales</taxon>
        <taxon>Onygenaceae</taxon>
        <taxon>Coccidioides</taxon>
    </lineage>
</organism>
<accession>C5PIC1</accession>
<feature type="chain" id="PRO_0000393820" description="Methylthioribulose-1-phosphate dehydratase">
    <location>
        <begin position="1"/>
        <end position="237"/>
    </location>
</feature>
<feature type="active site" description="Proton donor/acceptor" evidence="1">
    <location>
        <position position="143"/>
    </location>
</feature>
<feature type="binding site" evidence="1">
    <location>
        <position position="97"/>
    </location>
    <ligand>
        <name>substrate</name>
    </ligand>
</feature>
<feature type="binding site" evidence="1">
    <location>
        <position position="114"/>
    </location>
    <ligand>
        <name>Zn(2+)</name>
        <dbReference type="ChEBI" id="CHEBI:29105"/>
    </ligand>
</feature>
<feature type="binding site" evidence="1">
    <location>
        <position position="116"/>
    </location>
    <ligand>
        <name>Zn(2+)</name>
        <dbReference type="ChEBI" id="CHEBI:29105"/>
    </ligand>
</feature>
<feature type="binding site" evidence="1">
    <location>
        <position position="199"/>
    </location>
    <ligand>
        <name>Zn(2+)</name>
        <dbReference type="ChEBI" id="CHEBI:29105"/>
    </ligand>
</feature>
<dbReference type="EC" id="4.2.1.109" evidence="1"/>
<dbReference type="EMBL" id="ACFW01000049">
    <property type="protein sequence ID" value="EER24274.1"/>
    <property type="molecule type" value="Genomic_DNA"/>
</dbReference>
<dbReference type="RefSeq" id="XP_003066419.1">
    <property type="nucleotide sequence ID" value="XM_003066373.1"/>
</dbReference>
<dbReference type="SMR" id="C5PIC1"/>
<dbReference type="GeneID" id="9691889"/>
<dbReference type="KEGG" id="cpw:9691889"/>
<dbReference type="VEuPathDB" id="FungiDB:CPC735_056440"/>
<dbReference type="HOGENOM" id="CLU_006033_4_0_1"/>
<dbReference type="OrthoDB" id="191080at2759"/>
<dbReference type="UniPathway" id="UPA00904">
    <property type="reaction ID" value="UER00875"/>
</dbReference>
<dbReference type="Proteomes" id="UP000009084">
    <property type="component" value="Unassembled WGS sequence"/>
</dbReference>
<dbReference type="GO" id="GO:0005737">
    <property type="term" value="C:cytoplasm"/>
    <property type="evidence" value="ECO:0007669"/>
    <property type="project" value="UniProtKB-SubCell"/>
</dbReference>
<dbReference type="GO" id="GO:0046570">
    <property type="term" value="F:methylthioribulose 1-phosphate dehydratase activity"/>
    <property type="evidence" value="ECO:0007669"/>
    <property type="project" value="UniProtKB-UniRule"/>
</dbReference>
<dbReference type="GO" id="GO:0008270">
    <property type="term" value="F:zinc ion binding"/>
    <property type="evidence" value="ECO:0007669"/>
    <property type="project" value="UniProtKB-UniRule"/>
</dbReference>
<dbReference type="GO" id="GO:0019509">
    <property type="term" value="P:L-methionine salvage from methylthioadenosine"/>
    <property type="evidence" value="ECO:0007669"/>
    <property type="project" value="UniProtKB-UniRule"/>
</dbReference>
<dbReference type="FunFam" id="3.40.225.10:FF:000003">
    <property type="entry name" value="Methylthioribulose-1-phosphate dehydratase"/>
    <property type="match status" value="1"/>
</dbReference>
<dbReference type="Gene3D" id="3.40.225.10">
    <property type="entry name" value="Class II aldolase/adducin N-terminal domain"/>
    <property type="match status" value="1"/>
</dbReference>
<dbReference type="HAMAP" id="MF_03116">
    <property type="entry name" value="Salvage_MtnB_euk"/>
    <property type="match status" value="1"/>
</dbReference>
<dbReference type="InterPro" id="IPR001303">
    <property type="entry name" value="Aldolase_II/adducin_N"/>
</dbReference>
<dbReference type="InterPro" id="IPR036409">
    <property type="entry name" value="Aldolase_II/adducin_N_sf"/>
</dbReference>
<dbReference type="InterPro" id="IPR017714">
    <property type="entry name" value="MethylthioRu-1-P_deHdtase_MtnB"/>
</dbReference>
<dbReference type="InterPro" id="IPR027514">
    <property type="entry name" value="Salvage_MtnB_euk"/>
</dbReference>
<dbReference type="NCBIfam" id="TIGR03328">
    <property type="entry name" value="salvage_mtnB"/>
    <property type="match status" value="1"/>
</dbReference>
<dbReference type="PANTHER" id="PTHR10640">
    <property type="entry name" value="METHYLTHIORIBULOSE-1-PHOSPHATE DEHYDRATASE"/>
    <property type="match status" value="1"/>
</dbReference>
<dbReference type="PANTHER" id="PTHR10640:SF7">
    <property type="entry name" value="METHYLTHIORIBULOSE-1-PHOSPHATE DEHYDRATASE"/>
    <property type="match status" value="1"/>
</dbReference>
<dbReference type="Pfam" id="PF00596">
    <property type="entry name" value="Aldolase_II"/>
    <property type="match status" value="1"/>
</dbReference>
<dbReference type="SMART" id="SM01007">
    <property type="entry name" value="Aldolase_II"/>
    <property type="match status" value="1"/>
</dbReference>
<dbReference type="SUPFAM" id="SSF53639">
    <property type="entry name" value="AraD/HMP-PK domain-like"/>
    <property type="match status" value="1"/>
</dbReference>
<sequence length="237" mass="26631">MTDPENNDQLVKSSDPEHPANLIPELCKKFYTLGWVTGTGGGTSIRRGDHIFIAPSGVQKEMIKSEDIFVLSYPTPKYPPSARQYIRKPRELKPSACTPLFLAAFDRGAGCSIHTHSQWAVLVTLLVEREKGKNGCFEINNIEQIKGIPKGKGKGMLGYFDTLRIPIIENTAFEEDLTESLEQAMDEYPDTYAVLVRRHGIYVWGDTPAKAKTQCESLDYLFQLAVEMHKLGIPWIQ</sequence>
<evidence type="ECO:0000255" key="1">
    <source>
        <dbReference type="HAMAP-Rule" id="MF_03116"/>
    </source>
</evidence>